<comment type="function">
    <text evidence="1">Binds as a heterodimer with protein bS6 to the central domain of the 16S rRNA, where it helps stabilize the platform of the 30S subunit.</text>
</comment>
<comment type="subunit">
    <text evidence="1">Part of the 30S ribosomal subunit. Forms a tight heterodimer with protein bS6.</text>
</comment>
<comment type="similarity">
    <text evidence="1">Belongs to the bacterial ribosomal protein bS18 family.</text>
</comment>
<proteinExistence type="inferred from homology"/>
<sequence>MARRGRPKRRKVCFFTANKITHIDYKDVDLLKRFISERGKILPRRVTGTSAKYQRKLTVAIKRARQVALLPYVNDVN</sequence>
<feature type="chain" id="PRO_0000111115" description="Small ribosomal subunit protein bS18">
    <location>
        <begin position="1"/>
        <end position="77"/>
    </location>
</feature>
<organism>
    <name type="scientific">Shouchella clausii (strain KSM-K16)</name>
    <name type="common">Alkalihalobacillus clausii</name>
    <dbReference type="NCBI Taxonomy" id="66692"/>
    <lineage>
        <taxon>Bacteria</taxon>
        <taxon>Bacillati</taxon>
        <taxon>Bacillota</taxon>
        <taxon>Bacilli</taxon>
        <taxon>Bacillales</taxon>
        <taxon>Bacillaceae</taxon>
        <taxon>Shouchella</taxon>
    </lineage>
</organism>
<accession>Q5WAH5</accession>
<gene>
    <name evidence="1" type="primary">rpsR</name>
    <name type="ordered locus">ABC4105</name>
</gene>
<protein>
    <recommendedName>
        <fullName evidence="1">Small ribosomal subunit protein bS18</fullName>
    </recommendedName>
    <alternativeName>
        <fullName evidence="2">30S ribosomal protein S18</fullName>
    </alternativeName>
</protein>
<name>RS18_SHOC1</name>
<dbReference type="EMBL" id="AP006627">
    <property type="protein sequence ID" value="BAD66636.1"/>
    <property type="molecule type" value="Genomic_DNA"/>
</dbReference>
<dbReference type="RefSeq" id="WP_011248938.1">
    <property type="nucleotide sequence ID" value="NC_006582.1"/>
</dbReference>
<dbReference type="SMR" id="Q5WAH5"/>
<dbReference type="STRING" id="66692.ABC4105"/>
<dbReference type="GeneID" id="86928443"/>
<dbReference type="KEGG" id="bcl:ABC4105"/>
<dbReference type="eggNOG" id="COG0238">
    <property type="taxonomic scope" value="Bacteria"/>
</dbReference>
<dbReference type="HOGENOM" id="CLU_148710_2_2_9"/>
<dbReference type="OrthoDB" id="9812008at2"/>
<dbReference type="Proteomes" id="UP000001168">
    <property type="component" value="Chromosome"/>
</dbReference>
<dbReference type="GO" id="GO:0022627">
    <property type="term" value="C:cytosolic small ribosomal subunit"/>
    <property type="evidence" value="ECO:0007669"/>
    <property type="project" value="TreeGrafter"/>
</dbReference>
<dbReference type="GO" id="GO:0070181">
    <property type="term" value="F:small ribosomal subunit rRNA binding"/>
    <property type="evidence" value="ECO:0007669"/>
    <property type="project" value="TreeGrafter"/>
</dbReference>
<dbReference type="GO" id="GO:0003735">
    <property type="term" value="F:structural constituent of ribosome"/>
    <property type="evidence" value="ECO:0007669"/>
    <property type="project" value="InterPro"/>
</dbReference>
<dbReference type="GO" id="GO:0006412">
    <property type="term" value="P:translation"/>
    <property type="evidence" value="ECO:0007669"/>
    <property type="project" value="UniProtKB-UniRule"/>
</dbReference>
<dbReference type="FunFam" id="4.10.640.10:FF:000003">
    <property type="entry name" value="30S ribosomal protein S18"/>
    <property type="match status" value="1"/>
</dbReference>
<dbReference type="Gene3D" id="4.10.640.10">
    <property type="entry name" value="Ribosomal protein S18"/>
    <property type="match status" value="1"/>
</dbReference>
<dbReference type="HAMAP" id="MF_00270">
    <property type="entry name" value="Ribosomal_bS18"/>
    <property type="match status" value="1"/>
</dbReference>
<dbReference type="InterPro" id="IPR001648">
    <property type="entry name" value="Ribosomal_bS18"/>
</dbReference>
<dbReference type="InterPro" id="IPR018275">
    <property type="entry name" value="Ribosomal_bS18_CS"/>
</dbReference>
<dbReference type="InterPro" id="IPR036870">
    <property type="entry name" value="Ribosomal_bS18_sf"/>
</dbReference>
<dbReference type="NCBIfam" id="TIGR00165">
    <property type="entry name" value="S18"/>
    <property type="match status" value="1"/>
</dbReference>
<dbReference type="PANTHER" id="PTHR13479">
    <property type="entry name" value="30S RIBOSOMAL PROTEIN S18"/>
    <property type="match status" value="1"/>
</dbReference>
<dbReference type="PANTHER" id="PTHR13479:SF40">
    <property type="entry name" value="SMALL RIBOSOMAL SUBUNIT PROTEIN BS18M"/>
    <property type="match status" value="1"/>
</dbReference>
<dbReference type="Pfam" id="PF01084">
    <property type="entry name" value="Ribosomal_S18"/>
    <property type="match status" value="1"/>
</dbReference>
<dbReference type="PRINTS" id="PR00974">
    <property type="entry name" value="RIBOSOMALS18"/>
</dbReference>
<dbReference type="SUPFAM" id="SSF46911">
    <property type="entry name" value="Ribosomal protein S18"/>
    <property type="match status" value="1"/>
</dbReference>
<dbReference type="PROSITE" id="PS00057">
    <property type="entry name" value="RIBOSOMAL_S18"/>
    <property type="match status" value="1"/>
</dbReference>
<keyword id="KW-1185">Reference proteome</keyword>
<keyword id="KW-0687">Ribonucleoprotein</keyword>
<keyword id="KW-0689">Ribosomal protein</keyword>
<keyword id="KW-0694">RNA-binding</keyword>
<keyword id="KW-0699">rRNA-binding</keyword>
<evidence type="ECO:0000255" key="1">
    <source>
        <dbReference type="HAMAP-Rule" id="MF_00270"/>
    </source>
</evidence>
<evidence type="ECO:0000305" key="2"/>
<reference key="1">
    <citation type="submission" date="2003-10" db="EMBL/GenBank/DDBJ databases">
        <title>The complete genome sequence of the alkaliphilic Bacillus clausii KSM-K16.</title>
        <authorList>
            <person name="Takaki Y."/>
            <person name="Kageyama Y."/>
            <person name="Shimamura S."/>
            <person name="Suzuki H."/>
            <person name="Nishi S."/>
            <person name="Hatada Y."/>
            <person name="Kawai S."/>
            <person name="Ito S."/>
            <person name="Horikoshi K."/>
        </authorList>
    </citation>
    <scope>NUCLEOTIDE SEQUENCE [LARGE SCALE GENOMIC DNA]</scope>
    <source>
        <strain>KSM-K16</strain>
    </source>
</reference>